<sequence>MDFRILATSTSSLSKVSADALLIVVAGDPKQQGLDDPLDRVLSDAIAAGDLAFKAGRTLYLHRPLGVKAARVVFAVAGDAGPKAFKSAVAAGLGLIKPLGVKHLAVAASGAIEDSHAEAAAAAASDATYSYRHTKPSASPAPALQKITLLVDKAEAKAAQTGLSRGAAIALGVALARECANRPGNHCTPSFLAAEARKLAKLPRIKVDVLDRKACEKLGMGSFLAVAQGSDEPPKFIVLRYDGASRSDAPVVLVGKGITFDTGGISIKPAAEMDEMKYDMGGAASVLGSFRAVAELQPQVNVVGLIPSCENMPSGRAIKPGDVVTSMSGQTIEVLNTDAEGRLILCDALTYAERFKPAVVIDIATLTGACVIALGHHRSGLFSADDALADALLDAGSAGLDPAWRMPLDDEYEEALRSNFADMGNVGGRAGGAITAAMFLKKFTAKYRWAHLDIAGTAWKSGAAKGATGRPVPLLTHFVLSRTR</sequence>
<gene>
    <name evidence="1" type="primary">pepA</name>
    <name type="ordered locus">Mpe_A1942</name>
</gene>
<evidence type="ECO:0000255" key="1">
    <source>
        <dbReference type="HAMAP-Rule" id="MF_00181"/>
    </source>
</evidence>
<accession>A2SH61</accession>
<protein>
    <recommendedName>
        <fullName evidence="1">Probable cytosol aminopeptidase</fullName>
        <ecNumber evidence="1">3.4.11.1</ecNumber>
    </recommendedName>
    <alternativeName>
        <fullName evidence="1">Leucine aminopeptidase</fullName>
        <shortName evidence="1">LAP</shortName>
        <ecNumber evidence="1">3.4.11.10</ecNumber>
    </alternativeName>
    <alternativeName>
        <fullName evidence="1">Leucyl aminopeptidase</fullName>
    </alternativeName>
</protein>
<proteinExistence type="inferred from homology"/>
<feature type="chain" id="PRO_1000118459" description="Probable cytosol aminopeptidase">
    <location>
        <begin position="1"/>
        <end position="484"/>
    </location>
</feature>
<feature type="active site" evidence="1">
    <location>
        <position position="268"/>
    </location>
</feature>
<feature type="active site" evidence="1">
    <location>
        <position position="342"/>
    </location>
</feature>
<feature type="binding site" evidence="1">
    <location>
        <position position="256"/>
    </location>
    <ligand>
        <name>Mn(2+)</name>
        <dbReference type="ChEBI" id="CHEBI:29035"/>
        <label>2</label>
    </ligand>
</feature>
<feature type="binding site" evidence="1">
    <location>
        <position position="261"/>
    </location>
    <ligand>
        <name>Mn(2+)</name>
        <dbReference type="ChEBI" id="CHEBI:29035"/>
        <label>1</label>
    </ligand>
</feature>
<feature type="binding site" evidence="1">
    <location>
        <position position="261"/>
    </location>
    <ligand>
        <name>Mn(2+)</name>
        <dbReference type="ChEBI" id="CHEBI:29035"/>
        <label>2</label>
    </ligand>
</feature>
<feature type="binding site" evidence="1">
    <location>
        <position position="279"/>
    </location>
    <ligand>
        <name>Mn(2+)</name>
        <dbReference type="ChEBI" id="CHEBI:29035"/>
        <label>2</label>
    </ligand>
</feature>
<feature type="binding site" evidence="1">
    <location>
        <position position="338"/>
    </location>
    <ligand>
        <name>Mn(2+)</name>
        <dbReference type="ChEBI" id="CHEBI:29035"/>
        <label>1</label>
    </ligand>
</feature>
<feature type="binding site" evidence="1">
    <location>
        <position position="340"/>
    </location>
    <ligand>
        <name>Mn(2+)</name>
        <dbReference type="ChEBI" id="CHEBI:29035"/>
        <label>1</label>
    </ligand>
</feature>
<feature type="binding site" evidence="1">
    <location>
        <position position="340"/>
    </location>
    <ligand>
        <name>Mn(2+)</name>
        <dbReference type="ChEBI" id="CHEBI:29035"/>
        <label>2</label>
    </ligand>
</feature>
<organism>
    <name type="scientific">Methylibium petroleiphilum (strain ATCC BAA-1232 / LMG 22953 / PM1)</name>
    <dbReference type="NCBI Taxonomy" id="420662"/>
    <lineage>
        <taxon>Bacteria</taxon>
        <taxon>Pseudomonadati</taxon>
        <taxon>Pseudomonadota</taxon>
        <taxon>Betaproteobacteria</taxon>
        <taxon>Burkholderiales</taxon>
        <taxon>Sphaerotilaceae</taxon>
        <taxon>Methylibium</taxon>
    </lineage>
</organism>
<keyword id="KW-0031">Aminopeptidase</keyword>
<keyword id="KW-0963">Cytoplasm</keyword>
<keyword id="KW-0378">Hydrolase</keyword>
<keyword id="KW-0464">Manganese</keyword>
<keyword id="KW-0479">Metal-binding</keyword>
<keyword id="KW-0645">Protease</keyword>
<keyword id="KW-1185">Reference proteome</keyword>
<name>AMPA_METPP</name>
<comment type="function">
    <text evidence="1">Presumably involved in the processing and regular turnover of intracellular proteins. Catalyzes the removal of unsubstituted N-terminal amino acids from various peptides.</text>
</comment>
<comment type="catalytic activity">
    <reaction evidence="1">
        <text>Release of an N-terminal amino acid, Xaa-|-Yaa-, in which Xaa is preferably Leu, but may be other amino acids including Pro although not Arg or Lys, and Yaa may be Pro. Amino acid amides and methyl esters are also readily hydrolyzed, but rates on arylamides are exceedingly low.</text>
        <dbReference type="EC" id="3.4.11.1"/>
    </reaction>
</comment>
<comment type="catalytic activity">
    <reaction evidence="1">
        <text>Release of an N-terminal amino acid, preferentially leucine, but not glutamic or aspartic acids.</text>
        <dbReference type="EC" id="3.4.11.10"/>
    </reaction>
</comment>
<comment type="cofactor">
    <cofactor evidence="1">
        <name>Mn(2+)</name>
        <dbReference type="ChEBI" id="CHEBI:29035"/>
    </cofactor>
    <text evidence="1">Binds 2 manganese ions per subunit.</text>
</comment>
<comment type="subcellular location">
    <subcellularLocation>
        <location evidence="1">Cytoplasm</location>
    </subcellularLocation>
</comment>
<comment type="similarity">
    <text evidence="1">Belongs to the peptidase M17 family.</text>
</comment>
<dbReference type="EC" id="3.4.11.1" evidence="1"/>
<dbReference type="EC" id="3.4.11.10" evidence="1"/>
<dbReference type="EMBL" id="CP000555">
    <property type="protein sequence ID" value="ABM94900.1"/>
    <property type="molecule type" value="Genomic_DNA"/>
</dbReference>
<dbReference type="RefSeq" id="WP_011829537.1">
    <property type="nucleotide sequence ID" value="NC_008825.1"/>
</dbReference>
<dbReference type="SMR" id="A2SH61"/>
<dbReference type="STRING" id="420662.Mpe_A1942"/>
<dbReference type="MEROPS" id="M17.003"/>
<dbReference type="KEGG" id="mpt:Mpe_A1942"/>
<dbReference type="eggNOG" id="COG0260">
    <property type="taxonomic scope" value="Bacteria"/>
</dbReference>
<dbReference type="HOGENOM" id="CLU_013734_0_1_4"/>
<dbReference type="Proteomes" id="UP000000366">
    <property type="component" value="Chromosome"/>
</dbReference>
<dbReference type="GO" id="GO:0005737">
    <property type="term" value="C:cytoplasm"/>
    <property type="evidence" value="ECO:0007669"/>
    <property type="project" value="UniProtKB-SubCell"/>
</dbReference>
<dbReference type="GO" id="GO:0030145">
    <property type="term" value="F:manganese ion binding"/>
    <property type="evidence" value="ECO:0007669"/>
    <property type="project" value="UniProtKB-UniRule"/>
</dbReference>
<dbReference type="GO" id="GO:0070006">
    <property type="term" value="F:metalloaminopeptidase activity"/>
    <property type="evidence" value="ECO:0007669"/>
    <property type="project" value="InterPro"/>
</dbReference>
<dbReference type="GO" id="GO:0006508">
    <property type="term" value="P:proteolysis"/>
    <property type="evidence" value="ECO:0007669"/>
    <property type="project" value="UniProtKB-KW"/>
</dbReference>
<dbReference type="CDD" id="cd00433">
    <property type="entry name" value="Peptidase_M17"/>
    <property type="match status" value="1"/>
</dbReference>
<dbReference type="Gene3D" id="3.40.220.10">
    <property type="entry name" value="Leucine Aminopeptidase, subunit E, domain 1"/>
    <property type="match status" value="1"/>
</dbReference>
<dbReference type="Gene3D" id="3.40.630.10">
    <property type="entry name" value="Zn peptidases"/>
    <property type="match status" value="1"/>
</dbReference>
<dbReference type="HAMAP" id="MF_00181">
    <property type="entry name" value="Cytosol_peptidase_M17"/>
    <property type="match status" value="1"/>
</dbReference>
<dbReference type="InterPro" id="IPR011356">
    <property type="entry name" value="Leucine_aapep/pepB"/>
</dbReference>
<dbReference type="InterPro" id="IPR043472">
    <property type="entry name" value="Macro_dom-like"/>
</dbReference>
<dbReference type="InterPro" id="IPR000819">
    <property type="entry name" value="Peptidase_M17_C"/>
</dbReference>
<dbReference type="InterPro" id="IPR023042">
    <property type="entry name" value="Peptidase_M17_leu_NH2_pept"/>
</dbReference>
<dbReference type="InterPro" id="IPR008283">
    <property type="entry name" value="Peptidase_M17_N"/>
</dbReference>
<dbReference type="NCBIfam" id="NF002073">
    <property type="entry name" value="PRK00913.1-2"/>
    <property type="match status" value="1"/>
</dbReference>
<dbReference type="NCBIfam" id="NF002074">
    <property type="entry name" value="PRK00913.1-4"/>
    <property type="match status" value="1"/>
</dbReference>
<dbReference type="NCBIfam" id="NF002077">
    <property type="entry name" value="PRK00913.2-4"/>
    <property type="match status" value="1"/>
</dbReference>
<dbReference type="PANTHER" id="PTHR11963:SF23">
    <property type="entry name" value="CYTOSOL AMINOPEPTIDASE"/>
    <property type="match status" value="1"/>
</dbReference>
<dbReference type="PANTHER" id="PTHR11963">
    <property type="entry name" value="LEUCINE AMINOPEPTIDASE-RELATED"/>
    <property type="match status" value="1"/>
</dbReference>
<dbReference type="Pfam" id="PF00883">
    <property type="entry name" value="Peptidase_M17"/>
    <property type="match status" value="1"/>
</dbReference>
<dbReference type="Pfam" id="PF02789">
    <property type="entry name" value="Peptidase_M17_N"/>
    <property type="match status" value="1"/>
</dbReference>
<dbReference type="PRINTS" id="PR00481">
    <property type="entry name" value="LAMNOPPTDASE"/>
</dbReference>
<dbReference type="SUPFAM" id="SSF52949">
    <property type="entry name" value="Macro domain-like"/>
    <property type="match status" value="1"/>
</dbReference>
<dbReference type="SUPFAM" id="SSF53187">
    <property type="entry name" value="Zn-dependent exopeptidases"/>
    <property type="match status" value="1"/>
</dbReference>
<dbReference type="PROSITE" id="PS00631">
    <property type="entry name" value="CYTOSOL_AP"/>
    <property type="match status" value="1"/>
</dbReference>
<reference key="1">
    <citation type="journal article" date="2007" name="J. Bacteriol.">
        <title>Whole-genome analysis of the methyl tert-butyl ether-degrading beta-proteobacterium Methylibium petroleiphilum PM1.</title>
        <authorList>
            <person name="Kane S.R."/>
            <person name="Chakicherla A.Y."/>
            <person name="Chain P.S.G."/>
            <person name="Schmidt R."/>
            <person name="Shin M.W."/>
            <person name="Legler T.C."/>
            <person name="Scow K.M."/>
            <person name="Larimer F.W."/>
            <person name="Lucas S.M."/>
            <person name="Richardson P.M."/>
            <person name="Hristova K.R."/>
        </authorList>
    </citation>
    <scope>NUCLEOTIDE SEQUENCE [LARGE SCALE GENOMIC DNA]</scope>
    <source>
        <strain>ATCC BAA-1232 / LMG 22953 / PM1</strain>
    </source>
</reference>